<name>MDH_CHLFF</name>
<sequence length="328" mass="35865">MKLARTVSVAVTGGTGQIAYSFLFALAHGDVFGSDCGIDLRVYDLPGLERVLSGIRMELDDCAYPLLQSLRVTTSLEDAFDGIDAAFLIGAAPRGPGMERSDLLKRNGEIFSLQGSVLNTSAKRDAKIFVVGNPVNTNCWIAMSRAPKLNRRNFHSMLRLDQNRMQAMLAHRAQVPLDEVTNVVIWGNHSAKQVPDFTQSLISGKPAVEVISDRDWLENIMLPSIQNRGSAVIEARGKSSAGSAARALAEAARSIFVPKEGEWFSTGVCSDYNPYGIPEDLIFGFPCRMLPSGDYEIIPGLSWDVFIKNKIQISLDEISQEKANVSLL</sequence>
<accession>Q255I4</accession>
<feature type="chain" id="PRO_0000292371" description="Malate dehydrogenase">
    <location>
        <begin position="1"/>
        <end position="328"/>
    </location>
</feature>
<feature type="active site" description="Proton acceptor" evidence="1">
    <location>
        <position position="189"/>
    </location>
</feature>
<feature type="binding site" evidence="1">
    <location>
        <begin position="13"/>
        <end position="19"/>
    </location>
    <ligand>
        <name>NAD(+)</name>
        <dbReference type="ChEBI" id="CHEBI:57540"/>
    </ligand>
</feature>
<feature type="binding site" evidence="1">
    <location>
        <position position="94"/>
    </location>
    <ligand>
        <name>substrate</name>
    </ligand>
</feature>
<feature type="binding site" evidence="1">
    <location>
        <position position="100"/>
    </location>
    <ligand>
        <name>substrate</name>
    </ligand>
</feature>
<feature type="binding site" evidence="1">
    <location>
        <position position="107"/>
    </location>
    <ligand>
        <name>NAD(+)</name>
        <dbReference type="ChEBI" id="CHEBI:57540"/>
    </ligand>
</feature>
<feature type="binding site" evidence="1">
    <location>
        <position position="114"/>
    </location>
    <ligand>
        <name>NAD(+)</name>
        <dbReference type="ChEBI" id="CHEBI:57540"/>
    </ligand>
</feature>
<feature type="binding site" evidence="1">
    <location>
        <begin position="131"/>
        <end position="133"/>
    </location>
    <ligand>
        <name>NAD(+)</name>
        <dbReference type="ChEBI" id="CHEBI:57540"/>
    </ligand>
</feature>
<feature type="binding site" evidence="1">
    <location>
        <position position="133"/>
    </location>
    <ligand>
        <name>substrate</name>
    </ligand>
</feature>
<feature type="binding site" evidence="1">
    <location>
        <position position="164"/>
    </location>
    <ligand>
        <name>substrate</name>
    </ligand>
</feature>
<reference key="1">
    <citation type="journal article" date="2006" name="DNA Res.">
        <title>Genome sequence of the cat pathogen, Chlamydophila felis.</title>
        <authorList>
            <person name="Azuma Y."/>
            <person name="Hirakawa H."/>
            <person name="Yamashita A."/>
            <person name="Cai Y."/>
            <person name="Rahman M.A."/>
            <person name="Suzuki H."/>
            <person name="Mitaku S."/>
            <person name="Toh H."/>
            <person name="Goto S."/>
            <person name="Murakami T."/>
            <person name="Sugi K."/>
            <person name="Hayashi H."/>
            <person name="Fukushi H."/>
            <person name="Hattori M."/>
            <person name="Kuhara S."/>
            <person name="Shirai M."/>
        </authorList>
    </citation>
    <scope>NUCLEOTIDE SEQUENCE [LARGE SCALE GENOMIC DNA]</scope>
    <source>
        <strain>Fe/C-56</strain>
    </source>
</reference>
<evidence type="ECO:0000255" key="1">
    <source>
        <dbReference type="HAMAP-Rule" id="MF_01517"/>
    </source>
</evidence>
<comment type="function">
    <text evidence="1">Catalyzes the reversible oxidation of malate to oxaloacetate.</text>
</comment>
<comment type="catalytic activity">
    <reaction evidence="1">
        <text>(S)-malate + NAD(+) = oxaloacetate + NADH + H(+)</text>
        <dbReference type="Rhea" id="RHEA:21432"/>
        <dbReference type="ChEBI" id="CHEBI:15378"/>
        <dbReference type="ChEBI" id="CHEBI:15589"/>
        <dbReference type="ChEBI" id="CHEBI:16452"/>
        <dbReference type="ChEBI" id="CHEBI:57540"/>
        <dbReference type="ChEBI" id="CHEBI:57945"/>
        <dbReference type="EC" id="1.1.1.37"/>
    </reaction>
</comment>
<comment type="similarity">
    <text evidence="1">Belongs to the LDH/MDH superfamily. MDH type 2 family.</text>
</comment>
<proteinExistence type="inferred from homology"/>
<organism>
    <name type="scientific">Chlamydia felis (strain Fe/C-56)</name>
    <name type="common">Chlamydophila felis</name>
    <dbReference type="NCBI Taxonomy" id="264202"/>
    <lineage>
        <taxon>Bacteria</taxon>
        <taxon>Pseudomonadati</taxon>
        <taxon>Chlamydiota</taxon>
        <taxon>Chlamydiia</taxon>
        <taxon>Chlamydiales</taxon>
        <taxon>Chlamydiaceae</taxon>
        <taxon>Chlamydia/Chlamydophila group</taxon>
        <taxon>Chlamydia</taxon>
    </lineage>
</organism>
<gene>
    <name evidence="1" type="primary">mdh</name>
    <name type="ordered locus">CF0282</name>
</gene>
<dbReference type="EC" id="1.1.1.37" evidence="1"/>
<dbReference type="EMBL" id="AP006861">
    <property type="protein sequence ID" value="BAE81054.1"/>
    <property type="molecule type" value="Genomic_DNA"/>
</dbReference>
<dbReference type="RefSeq" id="WP_011457835.1">
    <property type="nucleotide sequence ID" value="NC_007899.1"/>
</dbReference>
<dbReference type="SMR" id="Q255I4"/>
<dbReference type="STRING" id="264202.CF0282"/>
<dbReference type="KEGG" id="cfe:CF0282"/>
<dbReference type="eggNOG" id="COG0039">
    <property type="taxonomic scope" value="Bacteria"/>
</dbReference>
<dbReference type="HOGENOM" id="CLU_040727_2_0_0"/>
<dbReference type="OrthoDB" id="9802969at2"/>
<dbReference type="Proteomes" id="UP000001260">
    <property type="component" value="Chromosome"/>
</dbReference>
<dbReference type="GO" id="GO:0030060">
    <property type="term" value="F:L-malate dehydrogenase (NAD+) activity"/>
    <property type="evidence" value="ECO:0007669"/>
    <property type="project" value="UniProtKB-UniRule"/>
</dbReference>
<dbReference type="GO" id="GO:0006108">
    <property type="term" value="P:malate metabolic process"/>
    <property type="evidence" value="ECO:0007669"/>
    <property type="project" value="InterPro"/>
</dbReference>
<dbReference type="GO" id="GO:0006099">
    <property type="term" value="P:tricarboxylic acid cycle"/>
    <property type="evidence" value="ECO:0007669"/>
    <property type="project" value="UniProtKB-UniRule"/>
</dbReference>
<dbReference type="FunFam" id="3.40.50.720:FF:000010">
    <property type="entry name" value="Malate dehydrogenase"/>
    <property type="match status" value="1"/>
</dbReference>
<dbReference type="FunFam" id="3.90.110.10:FF:000002">
    <property type="entry name" value="Malate dehydrogenase"/>
    <property type="match status" value="1"/>
</dbReference>
<dbReference type="Gene3D" id="3.90.110.10">
    <property type="entry name" value="Lactate dehydrogenase/glycoside hydrolase, family 4, C-terminal"/>
    <property type="match status" value="1"/>
</dbReference>
<dbReference type="Gene3D" id="3.40.50.720">
    <property type="entry name" value="NAD(P)-binding Rossmann-like Domain"/>
    <property type="match status" value="1"/>
</dbReference>
<dbReference type="HAMAP" id="MF_01517">
    <property type="entry name" value="Malate_dehydrog_2"/>
    <property type="match status" value="1"/>
</dbReference>
<dbReference type="InterPro" id="IPR001557">
    <property type="entry name" value="L-lactate/malate_DH"/>
</dbReference>
<dbReference type="InterPro" id="IPR022383">
    <property type="entry name" value="Lactate/malate_DH_C"/>
</dbReference>
<dbReference type="InterPro" id="IPR001236">
    <property type="entry name" value="Lactate/malate_DH_N"/>
</dbReference>
<dbReference type="InterPro" id="IPR015955">
    <property type="entry name" value="Lactate_DH/Glyco_Ohase_4_C"/>
</dbReference>
<dbReference type="InterPro" id="IPR010945">
    <property type="entry name" value="Malate_DH_type2"/>
</dbReference>
<dbReference type="InterPro" id="IPR036291">
    <property type="entry name" value="NAD(P)-bd_dom_sf"/>
</dbReference>
<dbReference type="NCBIfam" id="TIGR01759">
    <property type="entry name" value="MalateDH-SF1"/>
    <property type="match status" value="1"/>
</dbReference>
<dbReference type="NCBIfam" id="NF003916">
    <property type="entry name" value="PRK05442.1"/>
    <property type="match status" value="1"/>
</dbReference>
<dbReference type="PANTHER" id="PTHR23382">
    <property type="entry name" value="MALATE DEHYDROGENASE"/>
    <property type="match status" value="1"/>
</dbReference>
<dbReference type="Pfam" id="PF02866">
    <property type="entry name" value="Ldh_1_C"/>
    <property type="match status" value="1"/>
</dbReference>
<dbReference type="Pfam" id="PF00056">
    <property type="entry name" value="Ldh_1_N"/>
    <property type="match status" value="1"/>
</dbReference>
<dbReference type="PIRSF" id="PIRSF000102">
    <property type="entry name" value="Lac_mal_DH"/>
    <property type="match status" value="1"/>
</dbReference>
<dbReference type="SUPFAM" id="SSF56327">
    <property type="entry name" value="LDH C-terminal domain-like"/>
    <property type="match status" value="1"/>
</dbReference>
<dbReference type="SUPFAM" id="SSF51735">
    <property type="entry name" value="NAD(P)-binding Rossmann-fold domains"/>
    <property type="match status" value="1"/>
</dbReference>
<keyword id="KW-0520">NAD</keyword>
<keyword id="KW-0560">Oxidoreductase</keyword>
<keyword id="KW-0816">Tricarboxylic acid cycle</keyword>
<protein>
    <recommendedName>
        <fullName evidence="1">Malate dehydrogenase</fullName>
        <ecNumber evidence="1">1.1.1.37</ecNumber>
    </recommendedName>
</protein>